<accession>Q7NQE6</accession>
<sequence length="1390" mass="155556">MSYSFTEKKRIRKSFAKRASVLDVPFLLATQIDSYTEFLQLGTPLDERKDVGLQAAFKSIFPIVSHNGYARLDFAHYVLGEPPFDVQECQLRGITFAAPLRARIRLTIFDKESSKPVVKEVRENEVYMGEIPLMTANGSFIINGTERVIVSQLHRSPGVFFEHDRGKTHSSGKLLFSARVIPYRGSWLDFEFDPKDLLYFRIDRRRKMPVTILLKALGYTNEEILSEFYSFDTFYLTKSGVFMRVVPERLKGEVAKFDIVAADGKLIVAKDKRITAKHIRDIQTAELDRIEVPADALLGKMLAHNVVNQNTGEVIARANEEVTEEILAKLALAEVEQVEVLFTNDLDQGAYISQTLRTDDIQDQTQARVAIYRMMRPGEPPTEDAVEALFQRLFFSDETYDLSRVGRMKFSSRTYQYKFDDKTPEWFKTLIGEKFASRRDVMEGTLATEDIVSVIAILTELRNGRGEVDDIDHLGNRRVRSVGELAENQFRAGLVRVERAVKERLNQAESDNLMPHDLINAKPVSAAIKEFFGSSQLSQFMDQTNPLSEITHKRRVSALGPGGLTRERAGFEVRDVHPTHYGRVCPIETPEGPNIGLINSLSVYARTNEFGFLETPYRKVVDGKVTNEIDYLSAIEEGRYVIAQANAELDGEGALIDELVTCREKGETILATPDRVQYMDVATGQVVSVAASLIPFLEHDDANRALMGANMQRQAVPCLRPEKAFVGTGIERSVAVDSGTTVVARRGGVVDYVDAGRVVVRVNDEEATAGEVGVDIYNLTKFTRSNQNTNINQRPVVKVGDHIARGDVVADGASTDLGELALGQNMTIAFMPWNGYNYEDSILISEKLVAEDRYTSIHIEELSVVARDTKLGPEEITRDIPNLSERMAGRLDESGIVYIGAEVEAGDVLVGKVTPKGETQLTPEEKLLRAIFGEKASDVKDTSLRVPTGTVGTVIDVQVFTREGIERDKRAQSIIDAELKRYRLDLNDQLRIFDNDAFSRIERLIVGKAANGGPKRLAKGTVIDQEYLAGLPTKHDWFDIRMADEDIAKQLELIKESLAQKREEFDLKFEDKKRKLTQGDELPPGVQKMVKVYLAVKRRLQAGDKMAGRHGNKGVVSRILPVEDMPYMGDGRPVDIVLNPLGVPSRMNIGQILEVHLGWAAKGIGERINRMVREQSAAEIRAYLERIYNETGKPEEIAALSDAEVMQLAQNLSKGMTFATPVFDGAKEAEIKHMLDLAYPDGDELTEKMGFNESKTQMTLFDGRSGEAFDRKVTVGVMHYLKLHHLVDDKMHARSTGPYSLVTQQPLGGKAQFGGQRFGEMEVWALEAYGAAYTLQEMLTVKSDDVTGRTKVYENIVKGEHKIDAGMPESFNVLVKEIRSLGLDMDLERY</sequence>
<protein>
    <recommendedName>
        <fullName evidence="1">DNA-directed RNA polymerase subunit beta</fullName>
        <shortName evidence="1">RNAP subunit beta</shortName>
        <ecNumber evidence="1">2.7.7.6</ecNumber>
    </recommendedName>
    <alternativeName>
        <fullName evidence="1">RNA polymerase subunit beta</fullName>
    </alternativeName>
    <alternativeName>
        <fullName evidence="1">Transcriptase subunit beta</fullName>
    </alternativeName>
</protein>
<feature type="chain" id="PRO_0000047883" description="DNA-directed RNA polymerase subunit beta">
    <location>
        <begin position="1"/>
        <end position="1390"/>
    </location>
</feature>
<organism>
    <name type="scientific">Chromobacterium violaceum (strain ATCC 12472 / DSM 30191 / JCM 1249 / CCUG 213 / NBRC 12614 / NCIMB 9131 / NCTC 9757 / MK)</name>
    <dbReference type="NCBI Taxonomy" id="243365"/>
    <lineage>
        <taxon>Bacteria</taxon>
        <taxon>Pseudomonadati</taxon>
        <taxon>Pseudomonadota</taxon>
        <taxon>Betaproteobacteria</taxon>
        <taxon>Neisseriales</taxon>
        <taxon>Chromobacteriaceae</taxon>
        <taxon>Chromobacterium</taxon>
    </lineage>
</organism>
<name>RPOB_CHRVO</name>
<keyword id="KW-0240">DNA-directed RNA polymerase</keyword>
<keyword id="KW-0548">Nucleotidyltransferase</keyword>
<keyword id="KW-1185">Reference proteome</keyword>
<keyword id="KW-0804">Transcription</keyword>
<keyword id="KW-0808">Transferase</keyword>
<dbReference type="EC" id="2.7.7.6" evidence="1"/>
<dbReference type="EMBL" id="AE016825">
    <property type="protein sequence ID" value="AAQ61853.1"/>
    <property type="molecule type" value="Genomic_DNA"/>
</dbReference>
<dbReference type="RefSeq" id="WP_011137740.1">
    <property type="nucleotide sequence ID" value="NC_005085.1"/>
</dbReference>
<dbReference type="SMR" id="Q7NQE6"/>
<dbReference type="STRING" id="243365.CV_4193"/>
<dbReference type="GeneID" id="66366335"/>
<dbReference type="KEGG" id="cvi:CV_4193"/>
<dbReference type="eggNOG" id="COG0085">
    <property type="taxonomic scope" value="Bacteria"/>
</dbReference>
<dbReference type="HOGENOM" id="CLU_000524_4_3_4"/>
<dbReference type="OrthoDB" id="9803954at2"/>
<dbReference type="Proteomes" id="UP000001424">
    <property type="component" value="Chromosome"/>
</dbReference>
<dbReference type="GO" id="GO:0000428">
    <property type="term" value="C:DNA-directed RNA polymerase complex"/>
    <property type="evidence" value="ECO:0007669"/>
    <property type="project" value="UniProtKB-KW"/>
</dbReference>
<dbReference type="GO" id="GO:0003677">
    <property type="term" value="F:DNA binding"/>
    <property type="evidence" value="ECO:0007669"/>
    <property type="project" value="UniProtKB-UniRule"/>
</dbReference>
<dbReference type="GO" id="GO:0003899">
    <property type="term" value="F:DNA-directed RNA polymerase activity"/>
    <property type="evidence" value="ECO:0007669"/>
    <property type="project" value="UniProtKB-UniRule"/>
</dbReference>
<dbReference type="GO" id="GO:0032549">
    <property type="term" value="F:ribonucleoside binding"/>
    <property type="evidence" value="ECO:0007669"/>
    <property type="project" value="InterPro"/>
</dbReference>
<dbReference type="GO" id="GO:0006351">
    <property type="term" value="P:DNA-templated transcription"/>
    <property type="evidence" value="ECO:0007669"/>
    <property type="project" value="UniProtKB-UniRule"/>
</dbReference>
<dbReference type="CDD" id="cd00653">
    <property type="entry name" value="RNA_pol_B_RPB2"/>
    <property type="match status" value="1"/>
</dbReference>
<dbReference type="FunFam" id="2.30.150.10:FF:000001">
    <property type="entry name" value="DNA-directed RNA polymerase subunit beta"/>
    <property type="match status" value="1"/>
</dbReference>
<dbReference type="FunFam" id="2.40.50.100:FF:000006">
    <property type="entry name" value="DNA-directed RNA polymerase subunit beta"/>
    <property type="match status" value="1"/>
</dbReference>
<dbReference type="FunFam" id="2.40.50.150:FF:000001">
    <property type="entry name" value="DNA-directed RNA polymerase subunit beta"/>
    <property type="match status" value="1"/>
</dbReference>
<dbReference type="FunFam" id="3.90.1800.10:FF:000001">
    <property type="entry name" value="DNA-directed RNA polymerase subunit beta"/>
    <property type="match status" value="1"/>
</dbReference>
<dbReference type="Gene3D" id="2.40.50.100">
    <property type="match status" value="1"/>
</dbReference>
<dbReference type="Gene3D" id="2.40.50.150">
    <property type="match status" value="1"/>
</dbReference>
<dbReference type="Gene3D" id="3.90.1100.10">
    <property type="match status" value="2"/>
</dbReference>
<dbReference type="Gene3D" id="2.30.150.10">
    <property type="entry name" value="DNA-directed RNA polymerase, beta subunit, external 1 domain"/>
    <property type="match status" value="1"/>
</dbReference>
<dbReference type="Gene3D" id="2.40.270.10">
    <property type="entry name" value="DNA-directed RNA polymerase, subunit 2, domain 6"/>
    <property type="match status" value="2"/>
</dbReference>
<dbReference type="Gene3D" id="3.90.1800.10">
    <property type="entry name" value="RNA polymerase alpha subunit dimerisation domain"/>
    <property type="match status" value="1"/>
</dbReference>
<dbReference type="Gene3D" id="3.90.1110.10">
    <property type="entry name" value="RNA polymerase Rpb2, domain 2"/>
    <property type="match status" value="2"/>
</dbReference>
<dbReference type="HAMAP" id="MF_01321">
    <property type="entry name" value="RNApol_bact_RpoB"/>
    <property type="match status" value="1"/>
</dbReference>
<dbReference type="InterPro" id="IPR042107">
    <property type="entry name" value="DNA-dir_RNA_pol_bsu_ext_1_sf"/>
</dbReference>
<dbReference type="InterPro" id="IPR019462">
    <property type="entry name" value="DNA-dir_RNA_pol_bsu_external_1"/>
</dbReference>
<dbReference type="InterPro" id="IPR015712">
    <property type="entry name" value="DNA-dir_RNA_pol_su2"/>
</dbReference>
<dbReference type="InterPro" id="IPR007120">
    <property type="entry name" value="DNA-dir_RNAP_su2_dom"/>
</dbReference>
<dbReference type="InterPro" id="IPR037033">
    <property type="entry name" value="DNA-dir_RNAP_su2_hyb_sf"/>
</dbReference>
<dbReference type="InterPro" id="IPR010243">
    <property type="entry name" value="RNA_pol_bsu_bac"/>
</dbReference>
<dbReference type="InterPro" id="IPR007121">
    <property type="entry name" value="RNA_pol_bsu_CS"/>
</dbReference>
<dbReference type="InterPro" id="IPR007644">
    <property type="entry name" value="RNA_pol_bsu_protrusion"/>
</dbReference>
<dbReference type="InterPro" id="IPR007642">
    <property type="entry name" value="RNA_pol_Rpb2_2"/>
</dbReference>
<dbReference type="InterPro" id="IPR037034">
    <property type="entry name" value="RNA_pol_Rpb2_2_sf"/>
</dbReference>
<dbReference type="InterPro" id="IPR007645">
    <property type="entry name" value="RNA_pol_Rpb2_3"/>
</dbReference>
<dbReference type="InterPro" id="IPR007641">
    <property type="entry name" value="RNA_pol_Rpb2_7"/>
</dbReference>
<dbReference type="InterPro" id="IPR014724">
    <property type="entry name" value="RNA_pol_RPB2_OB-fold"/>
</dbReference>
<dbReference type="NCBIfam" id="NF001616">
    <property type="entry name" value="PRK00405.1"/>
    <property type="match status" value="1"/>
</dbReference>
<dbReference type="NCBIfam" id="TIGR02013">
    <property type="entry name" value="rpoB"/>
    <property type="match status" value="1"/>
</dbReference>
<dbReference type="PANTHER" id="PTHR20856">
    <property type="entry name" value="DNA-DIRECTED RNA POLYMERASE I SUBUNIT 2"/>
    <property type="match status" value="1"/>
</dbReference>
<dbReference type="Pfam" id="PF04563">
    <property type="entry name" value="RNA_pol_Rpb2_1"/>
    <property type="match status" value="1"/>
</dbReference>
<dbReference type="Pfam" id="PF04561">
    <property type="entry name" value="RNA_pol_Rpb2_2"/>
    <property type="match status" value="2"/>
</dbReference>
<dbReference type="Pfam" id="PF04565">
    <property type="entry name" value="RNA_pol_Rpb2_3"/>
    <property type="match status" value="1"/>
</dbReference>
<dbReference type="Pfam" id="PF10385">
    <property type="entry name" value="RNA_pol_Rpb2_45"/>
    <property type="match status" value="1"/>
</dbReference>
<dbReference type="Pfam" id="PF00562">
    <property type="entry name" value="RNA_pol_Rpb2_6"/>
    <property type="match status" value="1"/>
</dbReference>
<dbReference type="Pfam" id="PF04560">
    <property type="entry name" value="RNA_pol_Rpb2_7"/>
    <property type="match status" value="1"/>
</dbReference>
<dbReference type="SUPFAM" id="SSF64484">
    <property type="entry name" value="beta and beta-prime subunits of DNA dependent RNA-polymerase"/>
    <property type="match status" value="1"/>
</dbReference>
<dbReference type="PROSITE" id="PS01166">
    <property type="entry name" value="RNA_POL_BETA"/>
    <property type="match status" value="1"/>
</dbReference>
<reference key="1">
    <citation type="journal article" date="2003" name="Proc. Natl. Acad. Sci. U.S.A.">
        <title>The complete genome sequence of Chromobacterium violaceum reveals remarkable and exploitable bacterial adaptability.</title>
        <authorList>
            <person name="Vasconcelos A.T.R."/>
            <person name="de Almeida D.F."/>
            <person name="Hungria M."/>
            <person name="Guimaraes C.T."/>
            <person name="Antonio R.V."/>
            <person name="Almeida F.C."/>
            <person name="de Almeida L.G.P."/>
            <person name="de Almeida R."/>
            <person name="Alves-Gomes J.A."/>
            <person name="Andrade E.M."/>
            <person name="Araripe J."/>
            <person name="de Araujo M.F.F."/>
            <person name="Astolfi-Filho S."/>
            <person name="Azevedo V."/>
            <person name="Baptista A.J."/>
            <person name="Bataus L.A.M."/>
            <person name="Batista J.S."/>
            <person name="Belo A."/>
            <person name="van den Berg C."/>
            <person name="Bogo M."/>
            <person name="Bonatto S."/>
            <person name="Bordignon J."/>
            <person name="Brigido M.M."/>
            <person name="Brito C.A."/>
            <person name="Brocchi M."/>
            <person name="Burity H.A."/>
            <person name="Camargo A.A."/>
            <person name="Cardoso D.D.P."/>
            <person name="Carneiro N.P."/>
            <person name="Carraro D.M."/>
            <person name="Carvalho C.M.B."/>
            <person name="Cascardo J.C.M."/>
            <person name="Cavada B.S."/>
            <person name="Chueire L.M.O."/>
            <person name="Creczynski-Pasa T.B."/>
            <person name="Cunha-Junior N.C."/>
            <person name="Fagundes N."/>
            <person name="Falcao C.L."/>
            <person name="Fantinatti F."/>
            <person name="Farias I.P."/>
            <person name="Felipe M.S.S."/>
            <person name="Ferrari L.P."/>
            <person name="Ferro J.A."/>
            <person name="Ferro M.I.T."/>
            <person name="Franco G.R."/>
            <person name="Freitas N.S.A."/>
            <person name="Furlan L.R."/>
            <person name="Gazzinelli R.T."/>
            <person name="Gomes E.A."/>
            <person name="Goncalves P.R."/>
            <person name="Grangeiro T.B."/>
            <person name="Grattapaglia D."/>
            <person name="Grisard E.C."/>
            <person name="Hanna E.S."/>
            <person name="Jardim S.N."/>
            <person name="Laurino J."/>
            <person name="Leoi L.C.T."/>
            <person name="Lima L.F.A."/>
            <person name="Loureiro M.F."/>
            <person name="Lyra M.C.C.P."/>
            <person name="Madeira H.M.F."/>
            <person name="Manfio G.P."/>
            <person name="Maranhao A.Q."/>
            <person name="Martins W.S."/>
            <person name="di Mauro S.M.Z."/>
            <person name="de Medeiros S.R.B."/>
            <person name="Meissner R.V."/>
            <person name="Moreira M.A.M."/>
            <person name="Nascimento F.F."/>
            <person name="Nicolas M.F."/>
            <person name="Oliveira J.G."/>
            <person name="Oliveira S.C."/>
            <person name="Paixao R.F.C."/>
            <person name="Parente J.A."/>
            <person name="Pedrosa F.O."/>
            <person name="Pena S.D.J."/>
            <person name="Pereira J.O."/>
            <person name="Pereira M."/>
            <person name="Pinto L.S.R.C."/>
            <person name="Pinto L.S."/>
            <person name="Porto J.I.R."/>
            <person name="Potrich D.P."/>
            <person name="Ramalho-Neto C.E."/>
            <person name="Reis A.M.M."/>
            <person name="Rigo L.U."/>
            <person name="Rondinelli E."/>
            <person name="Santos E.B.P."/>
            <person name="Santos F.R."/>
            <person name="Schneider M.P.C."/>
            <person name="Seuanez H.N."/>
            <person name="Silva A.M.R."/>
            <person name="da Silva A.L.C."/>
            <person name="Silva D.W."/>
            <person name="Silva R."/>
            <person name="Simoes I.C."/>
            <person name="Simon D."/>
            <person name="Soares C.M.A."/>
            <person name="Soares R.B.A."/>
            <person name="Souza E.M."/>
            <person name="Souza K.R.L."/>
            <person name="Souza R.C."/>
            <person name="Steffens M.B.R."/>
            <person name="Steindel M."/>
            <person name="Teixeira S.R."/>
            <person name="Urmenyi T."/>
            <person name="Vettore A."/>
            <person name="Wassem R."/>
            <person name="Zaha A."/>
            <person name="Simpson A.J.G."/>
        </authorList>
    </citation>
    <scope>NUCLEOTIDE SEQUENCE [LARGE SCALE GENOMIC DNA]</scope>
    <source>
        <strain>ATCC 12472 / DSM 30191 / JCM 1249 / CCUG 213 / NBRC 12614 / NCIMB 9131 / NCTC 9757 / MK</strain>
    </source>
</reference>
<evidence type="ECO:0000255" key="1">
    <source>
        <dbReference type="HAMAP-Rule" id="MF_01321"/>
    </source>
</evidence>
<gene>
    <name evidence="1" type="primary">rpoB</name>
    <name type="ordered locus">CV_4193</name>
</gene>
<proteinExistence type="inferred from homology"/>
<comment type="function">
    <text evidence="1">DNA-dependent RNA polymerase catalyzes the transcription of DNA into RNA using the four ribonucleoside triphosphates as substrates.</text>
</comment>
<comment type="catalytic activity">
    <reaction evidence="1">
        <text>RNA(n) + a ribonucleoside 5'-triphosphate = RNA(n+1) + diphosphate</text>
        <dbReference type="Rhea" id="RHEA:21248"/>
        <dbReference type="Rhea" id="RHEA-COMP:14527"/>
        <dbReference type="Rhea" id="RHEA-COMP:17342"/>
        <dbReference type="ChEBI" id="CHEBI:33019"/>
        <dbReference type="ChEBI" id="CHEBI:61557"/>
        <dbReference type="ChEBI" id="CHEBI:140395"/>
        <dbReference type="EC" id="2.7.7.6"/>
    </reaction>
</comment>
<comment type="subunit">
    <text evidence="1">The RNAP catalytic core consists of 2 alpha, 1 beta, 1 beta' and 1 omega subunit. When a sigma factor is associated with the core the holoenzyme is formed, which can initiate transcription.</text>
</comment>
<comment type="similarity">
    <text evidence="1">Belongs to the RNA polymerase beta chain family.</text>
</comment>